<keyword id="KW-1074">Activation of host NF-kappa-B by virus</keyword>
<keyword id="KW-0010">Activator</keyword>
<keyword id="KW-0053">Apoptosis</keyword>
<keyword id="KW-1035">Host cytoplasm</keyword>
<keyword id="KW-1079">Host G2/M cell cycle arrest by virus</keyword>
<keyword id="KW-1045">Host mitochondrion</keyword>
<keyword id="KW-1048">Host nucleus</keyword>
<keyword id="KW-0945">Host-virus interaction</keyword>
<keyword id="KW-1121">Modulation of host cell cycle by virus</keyword>
<keyword id="KW-1185">Reference proteome</keyword>
<keyword id="KW-0804">Transcription</keyword>
<keyword id="KW-0805">Transcription regulation</keyword>
<evidence type="ECO:0000255" key="1">
    <source>
        <dbReference type="HAMAP-Rule" id="MF_04074"/>
    </source>
</evidence>
<evidence type="ECO:0000269" key="2">
    <source>
    </source>
</evidence>
<evidence type="ECO:0000269" key="3">
    <source>
    </source>
</evidence>
<evidence type="ECO:0000269" key="4">
    <source>
    </source>
</evidence>
<evidence type="ECO:0000269" key="5">
    <source>
    </source>
</evidence>
<evidence type="ECO:0000269" key="6">
    <source>
    </source>
</evidence>
<evidence type="ECO:0000269" key="7">
    <source>
    </source>
</evidence>
<evidence type="ECO:0000269" key="8">
    <source>
    </source>
</evidence>
<evidence type="ECO:0000269" key="9">
    <source>
    </source>
</evidence>
<evidence type="ECO:0000269" key="10">
    <source>
    </source>
</evidence>
<evidence type="ECO:0000269" key="11">
    <source>
    </source>
</evidence>
<evidence type="ECO:0000269" key="12">
    <source>
    </source>
</evidence>
<evidence type="ECO:0000269" key="13">
    <source>
    </source>
</evidence>
<evidence type="ECO:0000269" key="14">
    <source>
    </source>
</evidence>
<evidence type="ECO:0000269" key="15">
    <source>
    </source>
</evidence>
<evidence type="ECO:0000269" key="16">
    <source>
    </source>
</evidence>
<evidence type="ECO:0000269" key="17">
    <source>
    </source>
</evidence>
<evidence type="ECO:0000269" key="18">
    <source>
    </source>
</evidence>
<evidence type="ECO:0000269" key="19">
    <source>
    </source>
</evidence>
<evidence type="ECO:0000269" key="20">
    <source>
    </source>
</evidence>
<evidence type="ECO:0000269" key="21">
    <source>
    </source>
</evidence>
<evidence type="ECO:0000269" key="22">
    <source>
    </source>
</evidence>
<evidence type="ECO:0000269" key="23">
    <source>
    </source>
</evidence>
<evidence type="ECO:0000269" key="24">
    <source>
    </source>
</evidence>
<comment type="function">
    <text evidence="1 3 8 14 17 21 22">Multifunctional protein that plays a role in silencing host antiviral defenses and promoting viral transcription. Does not seem to be essential for HBV infection. May be directly involved in development of cirrhosis and liver cancer (hepatocellular carcinoma). Most of cytosolic activities involve modulation of cytosolic calcium. The effect on apoptosis is controversial depending on the cell types in which the studies have been conducted. May induce apoptosis by localizing in mitochondria and causing loss of mitochondrial membrane potential. May also modulate apoptosis by binding host CFLAR, a key regulator of the death-inducing signaling complex (DISC) (PubMed:10597295, PubMed:12676947). Promotes viral transcription by using the host E3 ubiquitin ligase DDB1 to target the SMC5-SMC6 complex to proteasomal degradation. This host complex would otherwise bind to viral episomal DNA, and prevents its transcription (PubMed:26983541). Moderately stimulates transcription of many different viral and cellular transcription elements. Promoters and enhancers stimulated by HBx contain DNA binding sites for NF-kappa-B, AP-1, AP-2, c-EBP, ATF/CREB, or the calcium-activated factor NF-AT (PubMed:2359621, PubMed:9054408, PubMed:9488473).</text>
</comment>
<comment type="subunit">
    <text evidence="1 2 4 9 10 11 12 15 16 17 18 20 24">May form homodimer. May interact with host CEBPA, CFLAR, CREB1, DDB1, E4F1, HBXIP, HSPD1/HSP60, NFKBIA, POLR2E and SMAD4 (PubMed:10454581, PubMed:11230153, PubMed:12727877, PubMed:12773388, PubMed:15120623, PubMed:1827531, PubMed:7828586, PubMed:9915821). Interacts with host SMC5-SMC6 complex and induces its degradation (PubMed:26983541). Interacts with host TRPC4AP; leading to prevent ubiquitination of TRPC4AP (PubMed:26038816). Interacts with host PLSCR1; this interaction promotes ubiquitination and degradation of HBx and impairs HBx-mediated cell proliferation (PubMed:25365352).</text>
</comment>
<comment type="interaction">
    <interactant intactId="EBI-3650820">
        <id>Q69027</id>
    </interactant>
    <interactant intactId="EBI-995373">
        <id>Q7Z434</id>
        <label>MAVS</label>
    </interactant>
    <organismsDiffer>true</organismsDiffer>
    <experiments>2</experiments>
</comment>
<comment type="subcellular location">
    <subcellularLocation>
        <location evidence="1 5 7 16 19 23">Host cytoplasm</location>
    </subcellularLocation>
    <subcellularLocation>
        <location evidence="1 5 7 19">Host nucleus</location>
    </subcellularLocation>
    <subcellularLocation>
        <location evidence="1 3 5">Host mitochondrion</location>
    </subcellularLocation>
    <text evidence="1 5">Mainly cytoplasmic as only a fraction is detected in the nucleus. In cytoplasm, a minor fraction associates with mitochondria or proteasomes.</text>
</comment>
<comment type="PTM">
    <text evidence="1 6 13">A fraction may be phosphorylated in insect cells and HepG2 cells, a human hepatoblastoma cell line. Phosphorylated in vitro by host protein kinase C or mitogen-activated protein kinase. N-acetylated in insect cells.</text>
</comment>
<comment type="similarity">
    <text evidence="1">Belongs to the orthohepadnavirus protein X family.</text>
</comment>
<comment type="caution">
    <text>Transcriptional activities should be taken with a grain of salt. all studies demonstrating in vivo interaction between protein X and transcriptional components were performed with significant overexpression of both proteins and in the absence of viral infection.</text>
</comment>
<organismHost>
    <name type="scientific">Homo sapiens</name>
    <name type="common">Human</name>
    <dbReference type="NCBI Taxonomy" id="9606"/>
</organismHost>
<organismHost>
    <name type="scientific">Pan troglodytes</name>
    <name type="common">Chimpanzee</name>
    <dbReference type="NCBI Taxonomy" id="9598"/>
</organismHost>
<reference key="1">
    <citation type="journal article" date="1986" name="J. Gen. Virol.">
        <title>Nucleotide sequence of a cloned hepatitis B virus genome, subtype ayr: comparison with genomes of the other three subtypes.</title>
        <authorList>
            <person name="Okamoto H."/>
            <person name="Imai M."/>
            <person name="Shimozaki M."/>
            <person name="Hoshi Y."/>
            <person name="Iizuka H."/>
            <person name="Gotanda T."/>
            <person name="Tsuda F."/>
            <person name="Miyakawa Y."/>
            <person name="Mayumi M."/>
        </authorList>
    </citation>
    <scope>NUCLEOTIDE SEQUENCE [GENOMIC DNA]</scope>
</reference>
<reference key="2">
    <citation type="journal article" date="1989" name="Biochem. Biophys. Res. Commun.">
        <title>Dimerization of hepatitis B viral X protein synthesized in a cell-free system.</title>
        <authorList>
            <person name="Lin M.H."/>
            <person name="Lo S.C."/>
        </authorList>
    </citation>
    <scope>HOMODIMERIZATION</scope>
    <source>
        <strain>Isolate Japan/Nishioka/1983</strain>
    </source>
</reference>
<reference key="3">
    <citation type="journal article" date="1990" name="Oncogene">
        <title>The identification of hepatitis B virus X gene responsive elements reveals functional similarity of X and HTLV-I tax.</title>
        <authorList>
            <person name="Faktor O."/>
            <person name="Shaul Y."/>
        </authorList>
    </citation>
    <scope>FUNCTION</scope>
    <source>
        <strain>Strain rutter 1979</strain>
    </source>
</reference>
<reference key="4">
    <citation type="journal article" date="1991" name="Oncogene">
        <title>Phosphorylation and rapid turnover of hepatitis B virus X-protein expressed in HepG2 cells from a recombinant vaccinia virus.</title>
        <authorList>
            <person name="Schek N."/>
            <person name="Bartenschlager R."/>
            <person name="Kuhn C."/>
            <person name="Schaller H."/>
        </authorList>
    </citation>
    <scope>PHOSPHORYLATION IN HEPG2 CELLS</scope>
    <source>
        <strain>Strain rutter 1979</strain>
    </source>
</reference>
<reference key="5">
    <citation type="journal article" date="1991" name="Science">
        <title>HBV X protein alters the DNA binding specificity of CREB and ATF-2 by protein-protein interactions.</title>
        <authorList>
            <person name="Maguire H.F."/>
            <person name="Hoeffler J.P."/>
            <person name="Siddiqui A."/>
        </authorList>
    </citation>
    <scope>INTERACTION WITH HUMAN CREB1</scope>
    <source>
        <strain>Strain rutter 1979</strain>
    </source>
</reference>
<reference key="6">
    <citation type="journal article" date="1995" name="EMBO J.">
        <title>The hepatitis B virus HBx protein is a dual specificity cytoplasmic activator of Ras and nuclear activator of transcription factors.</title>
        <authorList>
            <person name="Doria M."/>
            <person name="Klein N."/>
            <person name="Lucito R."/>
            <person name="Schneider R.J."/>
        </authorList>
    </citation>
    <scope>SUBCELLULAR LOCATION</scope>
    <source>
        <strain>Strain rutter 1979</strain>
    </source>
</reference>
<reference key="7">
    <citation type="journal article" date="1995" name="EMBO J.">
        <title>Human RPB5, a subunit shared by eukaryotic nuclear RNA polymerases, binds human hepatitis B virus X protein and may play a role in X transactivation.</title>
        <authorList>
            <person name="Cheong J.H."/>
            <person name="Yi M."/>
            <person name="Lin Y."/>
            <person name="Murakami S."/>
        </authorList>
    </citation>
    <scope>INTERACTION WITH HUMAN POLR2E</scope>
    <source>
        <strain>Isolate Japan/Nishioka/1983</strain>
    </source>
</reference>
<reference key="8">
    <citation type="journal article" date="1997" name="J. Biol. Chem.">
        <title>Hepatitis B virus X protein is a transcriptional modulator that communicates with transcription factor IIB and the RNA polymerase II subunit 5.</title>
        <authorList>
            <person name="Lin Y."/>
            <person name="Nomura T."/>
            <person name="Cheong J."/>
            <person name="Dorjsuren D."/>
            <person name="Iida K."/>
            <person name="Murakami S."/>
        </authorList>
    </citation>
    <scope>FUNCTION</scope>
    <source>
        <strain>Isolate Japan/Nishioka/1983</strain>
    </source>
</reference>
<reference key="9">
    <citation type="journal article" date="1998" name="Mol. Cell. Biol.">
        <title>Hepatitis B virus pX targets TFIIB in transcription coactivation.</title>
        <authorList>
            <person name="Haviv I."/>
            <person name="Shamay M."/>
            <person name="Doitsh G."/>
            <person name="Shaul Y."/>
        </authorList>
    </citation>
    <scope>FUNCTION</scope>
    <source>
        <strain>Strain rutter 1979</strain>
    </source>
</reference>
<reference key="10">
    <citation type="journal article" date="1998" name="Oncogene">
        <title>Cytosol is the prime compartment of hepatitis B virus X protein where it colocalizes with the proteasome.</title>
        <authorList>
            <person name="Sirma H."/>
            <person name="Weil R."/>
            <person name="Rosmorduc O."/>
            <person name="Urban S."/>
            <person name="Israel A."/>
            <person name="Kremsdorf D."/>
            <person name="Brechot C."/>
        </authorList>
    </citation>
    <scope>SUBCELLULAR LOCATION</scope>
    <source>
        <strain>Strain rutter 1979</strain>
    </source>
</reference>
<reference key="11">
    <citation type="journal article" date="1999" name="Oncogene">
        <title>Association of hepatitis B virus X protein with mitochondria causes mitochondrial aggregation at the nuclear periphery, leading to cell death.</title>
        <authorList>
            <person name="Takada S."/>
            <person name="Shirakata Y."/>
            <person name="Kaneniwa N."/>
            <person name="Koike K."/>
        </authorList>
    </citation>
    <scope>SUBCELLULAR LOCATION</scope>
    <scope>FUNCTION</scope>
    <source>
        <strain>Strain rutter 1979</strain>
    </source>
</reference>
<reference key="12">
    <citation type="journal article" date="1999" name="J. Biol. Chem.">
        <title>Interaction of hepatitis B viral X protein and CCAAT/enhancer-binding protein alpha synergistically activates the hepatitis B viral enhancer II/pregenomic promoter.</title>
        <authorList>
            <person name="Choi B.H."/>
            <person name="Park G.T."/>
            <person name="Rho H.M."/>
        </authorList>
    </citation>
    <scope>INTERACTION WITH HUMAN CEBPA</scope>
    <source>
        <strain>Strain rutter 1979</strain>
    </source>
</reference>
<reference key="13">
    <citation type="journal article" date="1999" name="Mol. Cell. Biol.">
        <title>Direct association and nuclear import of the hepatitis B virus X protein with the NF-kappaB inhibitor IkappaBalpha.</title>
        <authorList>
            <person name="Weil R."/>
            <person name="Sirma H."/>
            <person name="Giannini C."/>
            <person name="Kremsdorf D."/>
            <person name="Bessia C."/>
            <person name="Dargemont C."/>
            <person name="Brechot C."/>
            <person name="Israel A."/>
        </authorList>
    </citation>
    <scope>INTERACTION WITH HUMAN NFKBIA</scope>
    <source>
        <strain>Strain rutter 1979</strain>
    </source>
</reference>
<reference key="14">
    <citation type="journal article" date="2001" name="J. Gen. Virol.">
        <title>Intracellular localization of the hepatitis B virus HBx protein.</title>
        <authorList>
            <person name="Henkler F."/>
            <person name="Hoare J."/>
            <person name="Waseem N."/>
            <person name="Goldin R.D."/>
            <person name="McGarvey M.J."/>
            <person name="Koshy R."/>
            <person name="King I.A."/>
        </authorList>
    </citation>
    <scope>SUBCELLULAR LOCATION</scope>
    <source>
        <strain>Strain rutter 1979</strain>
    </source>
</reference>
<reference key="15">
    <citation type="journal article" date="2001" name="J. Med. Virol.">
        <title>Subcellular localisation of the X protein in HBV infected hepatocytes.</title>
        <authorList>
            <person name="Hoare J."/>
            <person name="Henkler F."/>
            <person name="Dowling J.J."/>
            <person name="Errington W."/>
            <person name="Goldin R.D."/>
            <person name="Fish D."/>
            <person name="McGarvey M.J."/>
        </authorList>
    </citation>
    <scope>SUBCELLULAR LOCATION</scope>
    <source>
        <strain>Strain rutter 1979</strain>
    </source>
</reference>
<reference key="16">
    <citation type="journal article" date="2001" name="J. Virol. Methods">
        <title>Phosphorylation of purified recombinant hepatitis B virus-X protein by mitogen-activated protein kinase and protein kinase C in vitro.</title>
        <authorList>
            <person name="Lee Y.I."/>
            <person name="Kim S.O."/>
            <person name="Kwon H.J."/>
            <person name="Park J.G."/>
            <person name="Sohn M.J."/>
            <person name="Jeong S.S."/>
        </authorList>
    </citation>
    <scope>PHOSPHORYLATION</scope>
    <source>
        <strain>Isolate Japan/Nishioka/1983</strain>
    </source>
</reference>
<reference key="17">
    <citation type="journal article" date="2001" name="Genes Dev.">
        <title>The hepatitis B virus encoded oncoprotein pX amplifies TGF-beta family signaling through direct interaction with Smad4: potential mechanism of hepatitis B virus-induced liver fibrosis.</title>
        <authorList>
            <person name="Lee D.K."/>
            <person name="Park S.H."/>
            <person name="Yi Y."/>
            <person name="Choi S.G."/>
            <person name="Lee C."/>
            <person name="Parks W.T."/>
            <person name="Cho H."/>
            <person name="de Caestecker M.P."/>
            <person name="Shaul Y."/>
            <person name="Roberts A.B."/>
            <person name="Kim S.J."/>
        </authorList>
    </citation>
    <scope>INTERACTION WITH HUMAN SMAD4</scope>
    <source>
        <strain>Isolate Japan/Nishioka/1983</strain>
    </source>
</reference>
<reference key="18">
    <citation type="journal article" date="2003" name="EMBO J.">
        <title>Pro-apoptotic function of HBV X protein is mediated by interaction with c-FLIP and enhancement of death-inducing signal.</title>
        <authorList>
            <person name="Kim K.H."/>
            <person name="Seong B.L."/>
        </authorList>
    </citation>
    <scope>INTERACTION WITH HUMAN CFLAR</scope>
    <source>
        <strain>Isolate Japan/Nishioka/1983</strain>
    </source>
</reference>
<reference key="19">
    <citation type="journal article" date="2003" name="EMBO J.">
        <title>HBXIP functions as a cofactor of survivin in apoptosis suppression.</title>
        <authorList>
            <person name="Marusawa H."/>
            <person name="Matsuzawa S."/>
            <person name="Welsh K."/>
            <person name="Zou H."/>
            <person name="Armstrong R."/>
            <person name="Tamm I."/>
            <person name="Reed J.C."/>
        </authorList>
    </citation>
    <scope>INTERACTION WITH HUMAN HBXIP</scope>
    <source>
        <strain>Isolate Japan/Nishioka/1983</strain>
    </source>
</reference>
<reference key="20">
    <citation type="journal article" date="2003" name="J. Biol. Chem.">
        <title>Hepatitis B virus X protein induces cell death by causing loss of mitochondrial membrane potential.</title>
        <authorList>
            <person name="Shirakata Y."/>
            <person name="Koike K."/>
        </authorList>
    </citation>
    <scope>FUNCTION IN APOPTOSIS</scope>
    <source>
        <strain>Strain rutter 1979</strain>
    </source>
</reference>
<reference key="21">
    <citation type="journal article" date="2004" name="Biochem. Biophys. Res. Commun.">
        <title>Interaction of the hepatitis B virus X protein (HBx) with heat shock protein 60 enhances HBx-mediated apoptosis.</title>
        <authorList>
            <person name="Tanaka Y."/>
            <person name="Kanai F."/>
            <person name="Kawakami T."/>
            <person name="Tateishi K."/>
            <person name="Ijichi H."/>
            <person name="Kawabe T."/>
            <person name="Arakawa Y."/>
            <person name="Kawakami T."/>
            <person name="Nishimura T."/>
            <person name="Shirakata Y."/>
            <person name="Koike K."/>
            <person name="Omata M."/>
        </authorList>
    </citation>
    <scope>INTERACTION WITH HUMAN HSPD1/HSP60</scope>
    <source>
        <strain>Strain rutter 1979</strain>
    </source>
</reference>
<reference key="22">
    <citation type="journal article" date="2015" name="Cell Cycle">
        <title>The G1 phase E3 ubiquitin ligase TRUSS that gets deregulated in human cancers is a novel substrate of the S-phase E3 ubiquitin ligase Skp2.</title>
        <authorList>
            <person name="Jamal A."/>
            <person name="Swarnalatha M."/>
            <person name="Sultana S."/>
            <person name="Joshi P."/>
            <person name="Panda S.K."/>
            <person name="Kumar V."/>
        </authorList>
    </citation>
    <scope>SUBCELLULAR LOCATION</scope>
    <scope>INTERACTION WITH HOST TRPC4AP</scope>
</reference>
<reference key="23">
    <citation type="journal article" date="2015" name="J. Proteome Res.">
        <title>Interactome map reveals phospholipid scramblase 1 as a novel regulator of hepatitis B virus x protein.</title>
        <authorList>
            <person name="Yuan Y."/>
            <person name="Tian C."/>
            <person name="Gong Q."/>
            <person name="Shang L."/>
            <person name="Zhang Y."/>
            <person name="Jin C."/>
            <person name="He F."/>
            <person name="Wang J."/>
        </authorList>
    </citation>
    <scope>INTERACTION WITH HOST PLSR1</scope>
</reference>
<reference key="24">
    <citation type="journal article" date="2016" name="Nature">
        <title>Hepatitis B virus X protein identifies the Smc5/6 complex as a host restriction factor.</title>
        <authorList>
            <person name="Decorsiere A."/>
            <person name="Mueller H."/>
            <person name="van Breugel P.C."/>
            <person name="Abdul F."/>
            <person name="Gerossier L."/>
            <person name="Beran R.K."/>
            <person name="Livingston C.M."/>
            <person name="Niu C."/>
            <person name="Fletcher S.P."/>
            <person name="Hantz O."/>
            <person name="Strubin M."/>
        </authorList>
    </citation>
    <scope>FUNCTION</scope>
    <scope>INTERACTION WITH HOST SMC5-SMC6 COMPLEX</scope>
</reference>
<reference key="25">
    <citation type="journal article" date="2004" name="J. Virol.">
        <title>The enigmatic X gene of hepatitis B virus.</title>
        <authorList>
            <person name="Bouchard M.J."/>
            <person name="Schneider R.J."/>
        </authorList>
    </citation>
    <scope>REVIEW</scope>
</reference>
<reference key="26">
    <citation type="journal article" date="2006" name="Cancer Sci.">
        <title>Molecular functions and biological roles of hepatitis B virus x protein.</title>
        <authorList>
            <person name="Tang H."/>
            <person name="Oishi N."/>
            <person name="Kaneko S."/>
            <person name="Murakami S."/>
        </authorList>
    </citation>
    <scope>REVIEW</scope>
</reference>
<accession>Q69027</accession>
<gene>
    <name evidence="1" type="primary">X</name>
</gene>
<feature type="chain" id="PRO_0000390311" description="Protein X">
    <location>
        <begin position="1"/>
        <end position="154"/>
    </location>
</feature>
<feature type="region of interest" description="Mitochondrial targeting sequence" evidence="1 8">
    <location>
        <begin position="68"/>
        <end position="117"/>
    </location>
</feature>
<name>X_HBVCJ</name>
<protein>
    <recommendedName>
        <fullName evidence="1">Protein X</fullName>
    </recommendedName>
    <alternativeName>
        <fullName evidence="1">HBx</fullName>
    </alternativeName>
    <alternativeName>
        <fullName evidence="1">Peptide X</fullName>
    </alternativeName>
    <alternativeName>
        <fullName evidence="1">pX</fullName>
    </alternativeName>
</protein>
<organism>
    <name type="scientific">Hepatitis B virus genotype C subtype ayr (isolate Human/Japan/Okamoto/-)</name>
    <name type="common">HBV-C</name>
    <dbReference type="NCBI Taxonomy" id="928302"/>
    <lineage>
        <taxon>Viruses</taxon>
        <taxon>Riboviria</taxon>
        <taxon>Pararnavirae</taxon>
        <taxon>Artverviricota</taxon>
        <taxon>Revtraviricetes</taxon>
        <taxon>Blubervirales</taxon>
        <taxon>Hepadnaviridae</taxon>
        <taxon>Orthohepadnavirus</taxon>
        <taxon>Hepatitis B virus</taxon>
        <taxon>hepatitis B virus genotype C</taxon>
    </lineage>
</organism>
<dbReference type="EMBL" id="X04615">
    <property type="protein sequence ID" value="CAA28288.1"/>
    <property type="molecule type" value="Genomic_DNA"/>
</dbReference>
<dbReference type="DIP" id="DIP-60873N"/>
<dbReference type="IntAct" id="Q69027">
    <property type="interactions" value="6"/>
</dbReference>
<dbReference type="Proteomes" id="UP000008591">
    <property type="component" value="Segment"/>
</dbReference>
<dbReference type="GO" id="GO:0033650">
    <property type="term" value="C:host cell mitochondrion"/>
    <property type="evidence" value="ECO:0007669"/>
    <property type="project" value="UniProtKB-SubCell"/>
</dbReference>
<dbReference type="GO" id="GO:0042025">
    <property type="term" value="C:host cell nucleus"/>
    <property type="evidence" value="ECO:0000314"/>
    <property type="project" value="UniProt"/>
</dbReference>
<dbReference type="GO" id="GO:1990756">
    <property type="term" value="F:ubiquitin-like ligase-substrate adaptor activity"/>
    <property type="evidence" value="ECO:0000314"/>
    <property type="project" value="UniProt"/>
</dbReference>
<dbReference type="GO" id="GO:0006351">
    <property type="term" value="P:DNA-templated transcription"/>
    <property type="evidence" value="ECO:0007669"/>
    <property type="project" value="UniProtKB-UniRule"/>
</dbReference>
<dbReference type="GO" id="GO:0085033">
    <property type="term" value="P:symbiont-mediated activation of host NF-kappaB cascade"/>
    <property type="evidence" value="ECO:0007669"/>
    <property type="project" value="UniProtKB-UniRule"/>
</dbReference>
<dbReference type="GO" id="GO:0039592">
    <property type="term" value="P:symbiont-mediated arrest of host cell cycle during G2/M transition"/>
    <property type="evidence" value="ECO:0007669"/>
    <property type="project" value="UniProtKB-UniRule"/>
</dbReference>
<dbReference type="GO" id="GO:0039693">
    <property type="term" value="P:viral DNA genome replication"/>
    <property type="evidence" value="ECO:0000314"/>
    <property type="project" value="UniProt"/>
</dbReference>
<dbReference type="HAMAP" id="MF_04074">
    <property type="entry name" value="HBV_X"/>
    <property type="match status" value="1"/>
</dbReference>
<dbReference type="InterPro" id="IPR000236">
    <property type="entry name" value="Transactivation_prot_X"/>
</dbReference>
<dbReference type="Pfam" id="PF00739">
    <property type="entry name" value="X"/>
    <property type="match status" value="1"/>
</dbReference>
<sequence>MAARLCCQLDPARDVLCLRPVGAESRGRPVSGPFGPLPSPSSSAVPADHGAHLSLRGLPVCAFSSAGPCALRFTSARSMETTVNAHQVLPKVLHKRTLGLSAMSTTDLEAYFKDCLFKDWEELGEEIRLKVFVLGGCRHKLVCSPAPCNFFPSA</sequence>
<proteinExistence type="evidence at protein level"/>